<reference key="1">
    <citation type="journal article" date="2005" name="Science">
        <title>The transcriptional landscape of the mammalian genome.</title>
        <authorList>
            <person name="Carninci P."/>
            <person name="Kasukawa T."/>
            <person name="Katayama S."/>
            <person name="Gough J."/>
            <person name="Frith M.C."/>
            <person name="Maeda N."/>
            <person name="Oyama R."/>
            <person name="Ravasi T."/>
            <person name="Lenhard B."/>
            <person name="Wells C."/>
            <person name="Kodzius R."/>
            <person name="Shimokawa K."/>
            <person name="Bajic V.B."/>
            <person name="Brenner S.E."/>
            <person name="Batalov S."/>
            <person name="Forrest A.R."/>
            <person name="Zavolan M."/>
            <person name="Davis M.J."/>
            <person name="Wilming L.G."/>
            <person name="Aidinis V."/>
            <person name="Allen J.E."/>
            <person name="Ambesi-Impiombato A."/>
            <person name="Apweiler R."/>
            <person name="Aturaliya R.N."/>
            <person name="Bailey T.L."/>
            <person name="Bansal M."/>
            <person name="Baxter L."/>
            <person name="Beisel K.W."/>
            <person name="Bersano T."/>
            <person name="Bono H."/>
            <person name="Chalk A.M."/>
            <person name="Chiu K.P."/>
            <person name="Choudhary V."/>
            <person name="Christoffels A."/>
            <person name="Clutterbuck D.R."/>
            <person name="Crowe M.L."/>
            <person name="Dalla E."/>
            <person name="Dalrymple B.P."/>
            <person name="de Bono B."/>
            <person name="Della Gatta G."/>
            <person name="di Bernardo D."/>
            <person name="Down T."/>
            <person name="Engstrom P."/>
            <person name="Fagiolini M."/>
            <person name="Faulkner G."/>
            <person name="Fletcher C.F."/>
            <person name="Fukushima T."/>
            <person name="Furuno M."/>
            <person name="Futaki S."/>
            <person name="Gariboldi M."/>
            <person name="Georgii-Hemming P."/>
            <person name="Gingeras T.R."/>
            <person name="Gojobori T."/>
            <person name="Green R.E."/>
            <person name="Gustincich S."/>
            <person name="Harbers M."/>
            <person name="Hayashi Y."/>
            <person name="Hensch T.K."/>
            <person name="Hirokawa N."/>
            <person name="Hill D."/>
            <person name="Huminiecki L."/>
            <person name="Iacono M."/>
            <person name="Ikeo K."/>
            <person name="Iwama A."/>
            <person name="Ishikawa T."/>
            <person name="Jakt M."/>
            <person name="Kanapin A."/>
            <person name="Katoh M."/>
            <person name="Kawasawa Y."/>
            <person name="Kelso J."/>
            <person name="Kitamura H."/>
            <person name="Kitano H."/>
            <person name="Kollias G."/>
            <person name="Krishnan S.P."/>
            <person name="Kruger A."/>
            <person name="Kummerfeld S.K."/>
            <person name="Kurochkin I.V."/>
            <person name="Lareau L.F."/>
            <person name="Lazarevic D."/>
            <person name="Lipovich L."/>
            <person name="Liu J."/>
            <person name="Liuni S."/>
            <person name="McWilliam S."/>
            <person name="Madan Babu M."/>
            <person name="Madera M."/>
            <person name="Marchionni L."/>
            <person name="Matsuda H."/>
            <person name="Matsuzawa S."/>
            <person name="Miki H."/>
            <person name="Mignone F."/>
            <person name="Miyake S."/>
            <person name="Morris K."/>
            <person name="Mottagui-Tabar S."/>
            <person name="Mulder N."/>
            <person name="Nakano N."/>
            <person name="Nakauchi H."/>
            <person name="Ng P."/>
            <person name="Nilsson R."/>
            <person name="Nishiguchi S."/>
            <person name="Nishikawa S."/>
            <person name="Nori F."/>
            <person name="Ohara O."/>
            <person name="Okazaki Y."/>
            <person name="Orlando V."/>
            <person name="Pang K.C."/>
            <person name="Pavan W.J."/>
            <person name="Pavesi G."/>
            <person name="Pesole G."/>
            <person name="Petrovsky N."/>
            <person name="Piazza S."/>
            <person name="Reed J."/>
            <person name="Reid J.F."/>
            <person name="Ring B.Z."/>
            <person name="Ringwald M."/>
            <person name="Rost B."/>
            <person name="Ruan Y."/>
            <person name="Salzberg S.L."/>
            <person name="Sandelin A."/>
            <person name="Schneider C."/>
            <person name="Schoenbach C."/>
            <person name="Sekiguchi K."/>
            <person name="Semple C.A."/>
            <person name="Seno S."/>
            <person name="Sessa L."/>
            <person name="Sheng Y."/>
            <person name="Shibata Y."/>
            <person name="Shimada H."/>
            <person name="Shimada K."/>
            <person name="Silva D."/>
            <person name="Sinclair B."/>
            <person name="Sperling S."/>
            <person name="Stupka E."/>
            <person name="Sugiura K."/>
            <person name="Sultana R."/>
            <person name="Takenaka Y."/>
            <person name="Taki K."/>
            <person name="Tammoja K."/>
            <person name="Tan S.L."/>
            <person name="Tang S."/>
            <person name="Taylor M.S."/>
            <person name="Tegner J."/>
            <person name="Teichmann S.A."/>
            <person name="Ueda H.R."/>
            <person name="van Nimwegen E."/>
            <person name="Verardo R."/>
            <person name="Wei C.L."/>
            <person name="Yagi K."/>
            <person name="Yamanishi H."/>
            <person name="Zabarovsky E."/>
            <person name="Zhu S."/>
            <person name="Zimmer A."/>
            <person name="Hide W."/>
            <person name="Bult C."/>
            <person name="Grimmond S.M."/>
            <person name="Teasdale R.D."/>
            <person name="Liu E.T."/>
            <person name="Brusic V."/>
            <person name="Quackenbush J."/>
            <person name="Wahlestedt C."/>
            <person name="Mattick J.S."/>
            <person name="Hume D.A."/>
            <person name="Kai C."/>
            <person name="Sasaki D."/>
            <person name="Tomaru Y."/>
            <person name="Fukuda S."/>
            <person name="Kanamori-Katayama M."/>
            <person name="Suzuki M."/>
            <person name="Aoki J."/>
            <person name="Arakawa T."/>
            <person name="Iida J."/>
            <person name="Imamura K."/>
            <person name="Itoh M."/>
            <person name="Kato T."/>
            <person name="Kawaji H."/>
            <person name="Kawagashira N."/>
            <person name="Kawashima T."/>
            <person name="Kojima M."/>
            <person name="Kondo S."/>
            <person name="Konno H."/>
            <person name="Nakano K."/>
            <person name="Ninomiya N."/>
            <person name="Nishio T."/>
            <person name="Okada M."/>
            <person name="Plessy C."/>
            <person name="Shibata K."/>
            <person name="Shiraki T."/>
            <person name="Suzuki S."/>
            <person name="Tagami M."/>
            <person name="Waki K."/>
            <person name="Watahiki A."/>
            <person name="Okamura-Oho Y."/>
            <person name="Suzuki H."/>
            <person name="Kawai J."/>
            <person name="Hayashizaki Y."/>
        </authorList>
    </citation>
    <scope>NUCLEOTIDE SEQUENCE [LARGE SCALE MRNA] (ISOFORMS 1 AND 2)</scope>
    <source>
        <strain>C57BL/6J</strain>
        <strain>NOD</strain>
        <tissue>Eye</tissue>
        <tissue>Thymus</tissue>
    </source>
</reference>
<reference key="2">
    <citation type="journal article" date="2004" name="Genome Res.">
        <title>The status, quality, and expansion of the NIH full-length cDNA project: the Mammalian Gene Collection (MGC).</title>
        <authorList>
            <consortium name="The MGC Project Team"/>
        </authorList>
    </citation>
    <scope>NUCLEOTIDE SEQUENCE [LARGE SCALE MRNA] (ISOFORM 1)</scope>
    <source>
        <strain>FVB/N-3</strain>
        <tissue>Mammary tumor</tissue>
    </source>
</reference>
<feature type="chain" id="PRO_0000337975" description="RCC1 domain-containing protein 1">
    <location>
        <begin position="1"/>
        <end position="377"/>
    </location>
</feature>
<feature type="repeat" description="RCC1 1">
    <location>
        <begin position="6"/>
        <end position="57"/>
    </location>
</feature>
<feature type="repeat" description="RCC1 2">
    <location>
        <begin position="179"/>
        <end position="230"/>
    </location>
</feature>
<feature type="repeat" description="RCC1 3">
    <location>
        <begin position="232"/>
        <end position="289"/>
    </location>
</feature>
<feature type="repeat" description="RCC1 4">
    <location>
        <begin position="319"/>
        <end position="372"/>
    </location>
</feature>
<feature type="region of interest" description="Interaction with KDM8" evidence="1">
    <location>
        <begin position="1"/>
        <end position="172"/>
    </location>
</feature>
<feature type="modified residue" description="(3R)-3-hydroxyarginine" evidence="1">
    <location>
        <position position="144"/>
    </location>
</feature>
<feature type="splice variant" id="VSP_034012" description="In isoform 2." evidence="2">
    <location>
        <begin position="1"/>
        <end position="214"/>
    </location>
</feature>
<feature type="sequence conflict" description="In Ref. 1; BAC27167." evidence="3" ref="1">
    <original>G</original>
    <variation>R</variation>
    <location>
        <position position="18"/>
    </location>
</feature>
<feature type="sequence conflict" description="In Ref. 1; BAC39142/BAC40487." evidence="3" ref="1">
    <original>V</original>
    <variation>L</variation>
    <location>
        <position position="30"/>
    </location>
</feature>
<feature type="sequence conflict" description="In Ref. 2; AAH69844." evidence="3" ref="2">
    <original>S</original>
    <variation>A</variation>
    <location>
        <position position="93"/>
    </location>
</feature>
<feature type="sequence conflict" description="In Ref. 2; AAH69844." evidence="3" ref="2">
    <original>V</original>
    <variation>L</variation>
    <location>
        <position position="97"/>
    </location>
</feature>
<feature type="sequence conflict" description="In Ref. 2; AAH69844." evidence="3" ref="2">
    <original>A</original>
    <variation>T</variation>
    <location>
        <position position="178"/>
    </location>
</feature>
<feature type="sequence conflict" description="In Ref. 2; AAH69844." evidence="3" ref="2">
    <original>N</original>
    <variation>K</variation>
    <location>
        <position position="255"/>
    </location>
</feature>
<feature type="sequence conflict" description="In Ref. 1; BAC27167." evidence="3" ref="1">
    <original>L</original>
    <variation>V</variation>
    <location>
        <position position="295"/>
    </location>
</feature>
<name>RCCD1_MOUSE</name>
<accession>Q8BTU7</accession>
<accession>Q6IS64</accession>
<accession>Q8BJF2</accession>
<accession>Q8C0K3</accession>
<proteinExistence type="evidence at transcript level"/>
<keyword id="KW-0025">Alternative splicing</keyword>
<keyword id="KW-0156">Chromatin regulator</keyword>
<keyword id="KW-0158">Chromosome</keyword>
<keyword id="KW-0379">Hydroxylation</keyword>
<keyword id="KW-1185">Reference proteome</keyword>
<keyword id="KW-0677">Repeat</keyword>
<comment type="function">
    <text evidence="1">Plays a role in transcriptional repression of satellite repeats, possibly by regulating H3K36 methylation levels in centromeric regions together with KDM8. Possibly together with KDM8, is involved in proper mitotic spindle organization and chromosome segregation. Plays a role in regulating alpha-tubulin deacetylation and cytoskeletal microtubule stability, thereby promoting cell migration and TGF-beta-induced epithelial to mesenchymal transition (EMT), potentially through the inhibition of KDM8.</text>
</comment>
<comment type="subunit">
    <text evidence="1">Found in a complex with KDM8. Interacts (via N-terminus) with KDM8 (via N-terminus).</text>
</comment>
<comment type="subcellular location">
    <subcellularLocation>
        <location evidence="1">Chromosome</location>
    </subcellularLocation>
    <text evidence="1">Colocalizes with trimethylated 'Lys-9' of histone H3 (H3K9me3).</text>
</comment>
<comment type="alternative products">
    <event type="alternative splicing"/>
    <isoform>
        <id>Q8BTU7-1</id>
        <name>1</name>
        <sequence type="displayed"/>
    </isoform>
    <isoform>
        <id>Q8BTU7-2</id>
        <name>2</name>
        <sequence type="described" ref="VSP_034012"/>
    </isoform>
</comment>
<comment type="PTM">
    <text evidence="1">Specifically hydroxylated (with R stereochemistry) at C-3 of ARG-141 by KDM8.</text>
</comment>
<sequence>MAEKRHGAWFGFGFCGFGQALGSGNSHHSVYSPEPLHASDDICQVSAGWSYTALVTRGGRVELSGSVSGAADGCRDVWASEELLVLLRNKGGSSTEVQAWVPGSALQGEPLWVQNLVSGAKGQGEDEPSRESRMGTLPLLPCARAYVTPEPPFCQPLAPELRVRQLELGAEHVLLLCAAGQVFSWGAGRHGQLGHGTLEAELEPRLLEALQGLRMAKVAAGGWHSVCLSETGDIYIWGWNESGQLALPTRSGTENKAEREEATELNEDGLKEELAVADAGAPAHFIAIQPFPALLDLPLGSDAVMASCGSRHTAVVTRTGELYTWGWGKYGQLGHKDSTSLDRPCCVEYFVERQLEVRAVTCGPWNTYVYAMERDKS</sequence>
<evidence type="ECO:0000250" key="1">
    <source>
        <dbReference type="UniProtKB" id="A6NED2"/>
    </source>
</evidence>
<evidence type="ECO:0000303" key="2">
    <source>
    </source>
</evidence>
<evidence type="ECO:0000305" key="3"/>
<dbReference type="EMBL" id="AK030872">
    <property type="protein sequence ID" value="BAC27167.1"/>
    <property type="molecule type" value="mRNA"/>
</dbReference>
<dbReference type="EMBL" id="AK084219">
    <property type="protein sequence ID" value="BAC39142.1"/>
    <property type="molecule type" value="mRNA"/>
</dbReference>
<dbReference type="EMBL" id="AK088662">
    <property type="protein sequence ID" value="BAC40487.1"/>
    <property type="molecule type" value="mRNA"/>
</dbReference>
<dbReference type="EMBL" id="BC069844">
    <property type="protein sequence ID" value="AAH69844.1"/>
    <property type="molecule type" value="mRNA"/>
</dbReference>
<dbReference type="CCDS" id="CCDS21394.1">
    <molecule id="Q8BTU7-1"/>
</dbReference>
<dbReference type="RefSeq" id="NP_775621.2">
    <molecule id="Q8BTU7-1"/>
    <property type="nucleotide sequence ID" value="NM_173445.4"/>
</dbReference>
<dbReference type="RefSeq" id="XP_006540989.1">
    <molecule id="Q8BTU7-1"/>
    <property type="nucleotide sequence ID" value="XM_006540926.4"/>
</dbReference>
<dbReference type="RefSeq" id="XP_006540991.1">
    <molecule id="Q8BTU7-1"/>
    <property type="nucleotide sequence ID" value="XM_006540928.4"/>
</dbReference>
<dbReference type="RefSeq" id="XP_006540992.1">
    <molecule id="Q8BTU7-1"/>
    <property type="nucleotide sequence ID" value="XM_006540929.4"/>
</dbReference>
<dbReference type="RefSeq" id="XP_017177783.1">
    <molecule id="Q8BTU7-1"/>
    <property type="nucleotide sequence ID" value="XM_017322294.3"/>
</dbReference>
<dbReference type="SMR" id="Q8BTU7"/>
<dbReference type="FunCoup" id="Q8BTU7">
    <property type="interactions" value="447"/>
</dbReference>
<dbReference type="STRING" id="10090.ENSMUSP00000048043"/>
<dbReference type="GlyGen" id="Q8BTU7">
    <property type="glycosylation" value="1 site"/>
</dbReference>
<dbReference type="iPTMnet" id="Q8BTU7"/>
<dbReference type="PhosphoSitePlus" id="Q8BTU7"/>
<dbReference type="PaxDb" id="10090-ENSMUSP00000048043"/>
<dbReference type="ProteomicsDB" id="255054">
    <molecule id="Q8BTU7-1"/>
</dbReference>
<dbReference type="ProteomicsDB" id="255055">
    <molecule id="Q8BTU7-2"/>
</dbReference>
<dbReference type="Antibodypedia" id="50047">
    <property type="antibodies" value="19 antibodies from 10 providers"/>
</dbReference>
<dbReference type="DNASU" id="269955"/>
<dbReference type="Ensembl" id="ENSMUST00000047362.11">
    <molecule id="Q8BTU7-1"/>
    <property type="protein sequence ID" value="ENSMUSP00000048043.5"/>
    <property type="gene ID" value="ENSMUSG00000038930.12"/>
</dbReference>
<dbReference type="Ensembl" id="ENSMUST00000121882.8">
    <molecule id="Q8BTU7-1"/>
    <property type="protein sequence ID" value="ENSMUSP00000113273.2"/>
    <property type="gene ID" value="ENSMUSG00000038930.12"/>
</dbReference>
<dbReference type="GeneID" id="269955"/>
<dbReference type="KEGG" id="mmu:269955"/>
<dbReference type="UCSC" id="uc009ial.2">
    <molecule id="Q8BTU7-1"/>
    <property type="organism name" value="mouse"/>
</dbReference>
<dbReference type="AGR" id="MGI:2444156"/>
<dbReference type="CTD" id="91433"/>
<dbReference type="MGI" id="MGI:2444156">
    <property type="gene designation" value="Rccd1"/>
</dbReference>
<dbReference type="VEuPathDB" id="HostDB:ENSMUSG00000038930"/>
<dbReference type="eggNOG" id="KOG1426">
    <property type="taxonomic scope" value="Eukaryota"/>
</dbReference>
<dbReference type="GeneTree" id="ENSGT00940000162149"/>
<dbReference type="HOGENOM" id="CLU_005210_2_1_1"/>
<dbReference type="InParanoid" id="Q8BTU7"/>
<dbReference type="OMA" id="PSWSMEI"/>
<dbReference type="OrthoDB" id="5370059at2759"/>
<dbReference type="PhylomeDB" id="Q8BTU7"/>
<dbReference type="TreeFam" id="TF329484"/>
<dbReference type="Reactome" id="R-MMU-9629569">
    <property type="pathway name" value="Protein hydroxylation"/>
</dbReference>
<dbReference type="BioGRID-ORCS" id="269955">
    <property type="hits" value="1 hit in 77 CRISPR screens"/>
</dbReference>
<dbReference type="ChiTaRS" id="Rccd1">
    <property type="organism name" value="mouse"/>
</dbReference>
<dbReference type="PRO" id="PR:Q8BTU7"/>
<dbReference type="Proteomes" id="UP000000589">
    <property type="component" value="Chromosome 7"/>
</dbReference>
<dbReference type="RNAct" id="Q8BTU7">
    <property type="molecule type" value="protein"/>
</dbReference>
<dbReference type="Bgee" id="ENSMUSG00000038930">
    <property type="expression patterns" value="Expressed in ureter smooth muscle and 195 other cell types or tissues"/>
</dbReference>
<dbReference type="ExpressionAtlas" id="Q8BTU7">
    <property type="expression patterns" value="baseline and differential"/>
</dbReference>
<dbReference type="GO" id="GO:0005694">
    <property type="term" value="C:chromosome"/>
    <property type="evidence" value="ECO:0007669"/>
    <property type="project" value="UniProtKB-SubCell"/>
</dbReference>
<dbReference type="GO" id="GO:0005829">
    <property type="term" value="C:cytosol"/>
    <property type="evidence" value="ECO:0007669"/>
    <property type="project" value="Ensembl"/>
</dbReference>
<dbReference type="GO" id="GO:0005886">
    <property type="term" value="C:plasma membrane"/>
    <property type="evidence" value="ECO:0007669"/>
    <property type="project" value="Ensembl"/>
</dbReference>
<dbReference type="GO" id="GO:0006325">
    <property type="term" value="P:chromatin organization"/>
    <property type="evidence" value="ECO:0007669"/>
    <property type="project" value="UniProtKB-KW"/>
</dbReference>
<dbReference type="Gene3D" id="2.130.10.30">
    <property type="entry name" value="Regulator of chromosome condensation 1/beta-lactamase-inhibitor protein II"/>
    <property type="match status" value="1"/>
</dbReference>
<dbReference type="InterPro" id="IPR009091">
    <property type="entry name" value="RCC1/BLIP-II"/>
</dbReference>
<dbReference type="InterPro" id="IPR052830">
    <property type="entry name" value="RCC1_domain-containing"/>
</dbReference>
<dbReference type="InterPro" id="IPR000408">
    <property type="entry name" value="Reg_chr_condens"/>
</dbReference>
<dbReference type="PANTHER" id="PTHR46849">
    <property type="entry name" value="RCC1 DOMAIN-CONTAINING PROTEIN 1"/>
    <property type="match status" value="1"/>
</dbReference>
<dbReference type="PANTHER" id="PTHR46849:SF1">
    <property type="entry name" value="RCC1 DOMAIN-CONTAINING PROTEIN 1"/>
    <property type="match status" value="1"/>
</dbReference>
<dbReference type="Pfam" id="PF00415">
    <property type="entry name" value="RCC1"/>
    <property type="match status" value="2"/>
</dbReference>
<dbReference type="PRINTS" id="PR00633">
    <property type="entry name" value="RCCNDNSATION"/>
</dbReference>
<dbReference type="SUPFAM" id="SSF50985">
    <property type="entry name" value="RCC1/BLIP-II"/>
    <property type="match status" value="1"/>
</dbReference>
<dbReference type="PROSITE" id="PS00626">
    <property type="entry name" value="RCC1_2"/>
    <property type="match status" value="2"/>
</dbReference>
<dbReference type="PROSITE" id="PS50012">
    <property type="entry name" value="RCC1_3"/>
    <property type="match status" value="3"/>
</dbReference>
<organism>
    <name type="scientific">Mus musculus</name>
    <name type="common">Mouse</name>
    <dbReference type="NCBI Taxonomy" id="10090"/>
    <lineage>
        <taxon>Eukaryota</taxon>
        <taxon>Metazoa</taxon>
        <taxon>Chordata</taxon>
        <taxon>Craniata</taxon>
        <taxon>Vertebrata</taxon>
        <taxon>Euteleostomi</taxon>
        <taxon>Mammalia</taxon>
        <taxon>Eutheria</taxon>
        <taxon>Euarchontoglires</taxon>
        <taxon>Glires</taxon>
        <taxon>Rodentia</taxon>
        <taxon>Myomorpha</taxon>
        <taxon>Muroidea</taxon>
        <taxon>Muridae</taxon>
        <taxon>Murinae</taxon>
        <taxon>Mus</taxon>
        <taxon>Mus</taxon>
    </lineage>
</organism>
<protein>
    <recommendedName>
        <fullName>RCC1 domain-containing protein 1</fullName>
    </recommendedName>
</protein>
<gene>
    <name type="primary">Rccd1</name>
</gene>